<comment type="function">
    <text evidence="1">Nucleotidyltransferase involved in the post-translational modification of proteins. It can catalyze the addition of adenosine monophosphate (AMP) or uridine monophosphate (UMP) to a protein, resulting in modifications known as AMPylation and UMPylation.</text>
</comment>
<comment type="catalytic activity">
    <reaction evidence="1">
        <text>L-seryl-[protein] + ATP = 3-O-(5'-adenylyl)-L-seryl-[protein] + diphosphate</text>
        <dbReference type="Rhea" id="RHEA:58120"/>
        <dbReference type="Rhea" id="RHEA-COMP:9863"/>
        <dbReference type="Rhea" id="RHEA-COMP:15073"/>
        <dbReference type="ChEBI" id="CHEBI:29999"/>
        <dbReference type="ChEBI" id="CHEBI:30616"/>
        <dbReference type="ChEBI" id="CHEBI:33019"/>
        <dbReference type="ChEBI" id="CHEBI:142516"/>
        <dbReference type="EC" id="2.7.7.108"/>
    </reaction>
</comment>
<comment type="catalytic activity">
    <reaction evidence="1">
        <text>L-threonyl-[protein] + ATP = 3-O-(5'-adenylyl)-L-threonyl-[protein] + diphosphate</text>
        <dbReference type="Rhea" id="RHEA:54292"/>
        <dbReference type="Rhea" id="RHEA-COMP:11060"/>
        <dbReference type="Rhea" id="RHEA-COMP:13847"/>
        <dbReference type="ChEBI" id="CHEBI:30013"/>
        <dbReference type="ChEBI" id="CHEBI:30616"/>
        <dbReference type="ChEBI" id="CHEBI:33019"/>
        <dbReference type="ChEBI" id="CHEBI:138113"/>
        <dbReference type="EC" id="2.7.7.108"/>
    </reaction>
</comment>
<comment type="catalytic activity">
    <reaction evidence="1">
        <text>L-tyrosyl-[protein] + ATP = O-(5'-adenylyl)-L-tyrosyl-[protein] + diphosphate</text>
        <dbReference type="Rhea" id="RHEA:54288"/>
        <dbReference type="Rhea" id="RHEA-COMP:10136"/>
        <dbReference type="Rhea" id="RHEA-COMP:13846"/>
        <dbReference type="ChEBI" id="CHEBI:30616"/>
        <dbReference type="ChEBI" id="CHEBI:33019"/>
        <dbReference type="ChEBI" id="CHEBI:46858"/>
        <dbReference type="ChEBI" id="CHEBI:83624"/>
        <dbReference type="EC" id="2.7.7.108"/>
    </reaction>
</comment>
<comment type="catalytic activity">
    <reaction evidence="1">
        <text>L-histidyl-[protein] + UTP = N(tele)-(5'-uridylyl)-L-histidyl-[protein] + diphosphate</text>
        <dbReference type="Rhea" id="RHEA:83891"/>
        <dbReference type="Rhea" id="RHEA-COMP:9745"/>
        <dbReference type="Rhea" id="RHEA-COMP:20239"/>
        <dbReference type="ChEBI" id="CHEBI:29979"/>
        <dbReference type="ChEBI" id="CHEBI:33019"/>
        <dbReference type="ChEBI" id="CHEBI:46398"/>
        <dbReference type="ChEBI" id="CHEBI:233474"/>
    </reaction>
</comment>
<comment type="catalytic activity">
    <reaction evidence="1">
        <text>L-seryl-[protein] + UTP = O-(5'-uridylyl)-L-seryl-[protein] + diphosphate</text>
        <dbReference type="Rhea" id="RHEA:64604"/>
        <dbReference type="Rhea" id="RHEA-COMP:9863"/>
        <dbReference type="Rhea" id="RHEA-COMP:16635"/>
        <dbReference type="ChEBI" id="CHEBI:29999"/>
        <dbReference type="ChEBI" id="CHEBI:33019"/>
        <dbReference type="ChEBI" id="CHEBI:46398"/>
        <dbReference type="ChEBI" id="CHEBI:156051"/>
    </reaction>
</comment>
<comment type="catalytic activity">
    <reaction evidence="1">
        <text>L-tyrosyl-[protein] + UTP = O-(5'-uridylyl)-L-tyrosyl-[protein] + diphosphate</text>
        <dbReference type="Rhea" id="RHEA:83887"/>
        <dbReference type="Rhea" id="RHEA-COMP:10136"/>
        <dbReference type="Rhea" id="RHEA-COMP:20238"/>
        <dbReference type="ChEBI" id="CHEBI:33019"/>
        <dbReference type="ChEBI" id="CHEBI:46398"/>
        <dbReference type="ChEBI" id="CHEBI:46858"/>
        <dbReference type="ChEBI" id="CHEBI:90602"/>
    </reaction>
</comment>
<comment type="cofactor">
    <cofactor evidence="1">
        <name>Mg(2+)</name>
        <dbReference type="ChEBI" id="CHEBI:18420"/>
    </cofactor>
    <cofactor evidence="1">
        <name>Mn(2+)</name>
        <dbReference type="ChEBI" id="CHEBI:29035"/>
    </cofactor>
</comment>
<comment type="similarity">
    <text evidence="1">Belongs to the SELO family.</text>
</comment>
<protein>
    <recommendedName>
        <fullName evidence="1">Protein nucleotidyltransferase YdiU</fullName>
        <ecNumber evidence="1">2.7.7.-</ecNumber>
    </recommendedName>
    <alternativeName>
        <fullName evidence="1">Protein adenylyltransferase YdiU</fullName>
        <ecNumber evidence="1">2.7.7.108</ecNumber>
    </alternativeName>
    <alternativeName>
        <fullName evidence="1">Protein uridylyltransferase YdiU</fullName>
        <ecNumber evidence="1">2.7.7.-</ecNumber>
    </alternativeName>
</protein>
<reference key="1">
    <citation type="submission" date="2007-04" db="EMBL/GenBank/DDBJ databases">
        <title>Complete sequence of chromosome of Rhodobacter sphaeroides ATCC 17025.</title>
        <authorList>
            <consortium name="US DOE Joint Genome Institute"/>
            <person name="Copeland A."/>
            <person name="Lucas S."/>
            <person name="Lapidus A."/>
            <person name="Barry K."/>
            <person name="Detter J.C."/>
            <person name="Glavina del Rio T."/>
            <person name="Hammon N."/>
            <person name="Israni S."/>
            <person name="Dalin E."/>
            <person name="Tice H."/>
            <person name="Pitluck S."/>
            <person name="Chertkov O."/>
            <person name="Brettin T."/>
            <person name="Bruce D."/>
            <person name="Han C."/>
            <person name="Schmutz J."/>
            <person name="Larimer F."/>
            <person name="Land M."/>
            <person name="Hauser L."/>
            <person name="Kyrpides N."/>
            <person name="Kim E."/>
            <person name="Richardson P."/>
            <person name="Mackenzie C."/>
            <person name="Choudhary M."/>
            <person name="Donohue T.J."/>
            <person name="Kaplan S."/>
        </authorList>
    </citation>
    <scope>NUCLEOTIDE SEQUENCE [LARGE SCALE GENOMIC DNA]</scope>
    <source>
        <strain>ATCC 17025 / ATH 2.4.3</strain>
    </source>
</reference>
<gene>
    <name evidence="1" type="primary">ydiU</name>
    <name evidence="1" type="synonym">selO</name>
    <name type="ordered locus">Rsph17025_1901</name>
</gene>
<sequence length="481" mass="52020">MTFRFDNSYARELEGFYVDWQAAPVPAPRLLRLNRGLAGELGLDADRLEAEGAAIFSGKRLPEGAHPLAQAYAGHQFGGFSPQLGDGRALLIGEVTDRSGRRRDLQLKGSGRTPFSRGADGKATLGPVLREYLVGEAMHGLGIPTTRALAAVATGEPVLRQAGELPGAILTRVAASHIRVGTFQFFAARSDMERVRRLADYAIARHYPALAEAPEPYLAFYEAVADAQADLVARWMLVGFIHGVMNTDNMAISGETIDYGPCAFMEGFDPGTVFSSIDLQGRYAYGNQPFILAWNLARLGEALLPLFDADAGRAAEKANAVLGTVGARYQARWLEGMRAKLGLAGAEEGDLSLAEDLLAAMQGARADWTLTFRRLADAVTEDAALRPVLQGPDTLQSWLSRWRRRLGPEAARRIRAVNPIYIARNHRVEEALAAAHAGDLGPFDRLIGALSDPFTERAGLEDLAQPAPAGFNEGYRTFCGT</sequence>
<accession>A4WTS8</accession>
<proteinExistence type="inferred from homology"/>
<dbReference type="EC" id="2.7.7.-" evidence="1"/>
<dbReference type="EC" id="2.7.7.108" evidence="1"/>
<dbReference type="EMBL" id="CP000661">
    <property type="protein sequence ID" value="ABP70792.1"/>
    <property type="molecule type" value="Genomic_DNA"/>
</dbReference>
<dbReference type="SMR" id="A4WTS8"/>
<dbReference type="STRING" id="349102.Rsph17025_1901"/>
<dbReference type="KEGG" id="rsq:Rsph17025_1901"/>
<dbReference type="eggNOG" id="COG0397">
    <property type="taxonomic scope" value="Bacteria"/>
</dbReference>
<dbReference type="HOGENOM" id="CLU_010245_4_1_5"/>
<dbReference type="BioCyc" id="RSPH349102:G1G8M-1966-MONOMER"/>
<dbReference type="GO" id="GO:0070733">
    <property type="term" value="F:AMPylase activity"/>
    <property type="evidence" value="ECO:0007669"/>
    <property type="project" value="RHEA"/>
</dbReference>
<dbReference type="GO" id="GO:0005524">
    <property type="term" value="F:ATP binding"/>
    <property type="evidence" value="ECO:0007669"/>
    <property type="project" value="UniProtKB-UniRule"/>
</dbReference>
<dbReference type="GO" id="GO:0000287">
    <property type="term" value="F:magnesium ion binding"/>
    <property type="evidence" value="ECO:0007669"/>
    <property type="project" value="UniProtKB-UniRule"/>
</dbReference>
<dbReference type="HAMAP" id="MF_00692">
    <property type="entry name" value="YdiU_SelO"/>
    <property type="match status" value="1"/>
</dbReference>
<dbReference type="InterPro" id="IPR003846">
    <property type="entry name" value="SelO"/>
</dbReference>
<dbReference type="NCBIfam" id="NF000658">
    <property type="entry name" value="PRK00029.1"/>
    <property type="match status" value="1"/>
</dbReference>
<dbReference type="PANTHER" id="PTHR32057">
    <property type="entry name" value="PROTEIN ADENYLYLTRANSFERASE SELO, MITOCHONDRIAL"/>
    <property type="match status" value="1"/>
</dbReference>
<dbReference type="PANTHER" id="PTHR32057:SF14">
    <property type="entry name" value="PROTEIN ADENYLYLTRANSFERASE SELO, MITOCHONDRIAL"/>
    <property type="match status" value="1"/>
</dbReference>
<dbReference type="Pfam" id="PF02696">
    <property type="entry name" value="SelO"/>
    <property type="match status" value="1"/>
</dbReference>
<keyword id="KW-0067">ATP-binding</keyword>
<keyword id="KW-0460">Magnesium</keyword>
<keyword id="KW-0464">Manganese</keyword>
<keyword id="KW-0479">Metal-binding</keyword>
<keyword id="KW-0547">Nucleotide-binding</keyword>
<keyword id="KW-0548">Nucleotidyltransferase</keyword>
<keyword id="KW-0808">Transferase</keyword>
<evidence type="ECO:0000255" key="1">
    <source>
        <dbReference type="HAMAP-Rule" id="MF_00692"/>
    </source>
</evidence>
<name>SELO_CERS5</name>
<feature type="chain" id="PRO_1000045255" description="Protein nucleotidyltransferase YdiU">
    <location>
        <begin position="1"/>
        <end position="481"/>
    </location>
</feature>
<feature type="active site" description="Proton acceptor" evidence="1">
    <location>
        <position position="248"/>
    </location>
</feature>
<feature type="binding site" evidence="1">
    <location>
        <position position="85"/>
    </location>
    <ligand>
        <name>ATP</name>
        <dbReference type="ChEBI" id="CHEBI:30616"/>
    </ligand>
</feature>
<feature type="binding site" evidence="1">
    <location>
        <position position="87"/>
    </location>
    <ligand>
        <name>ATP</name>
        <dbReference type="ChEBI" id="CHEBI:30616"/>
    </ligand>
</feature>
<feature type="binding site" evidence="1">
    <location>
        <position position="88"/>
    </location>
    <ligand>
        <name>ATP</name>
        <dbReference type="ChEBI" id="CHEBI:30616"/>
    </ligand>
</feature>
<feature type="binding site" evidence="1">
    <location>
        <position position="108"/>
    </location>
    <ligand>
        <name>ATP</name>
        <dbReference type="ChEBI" id="CHEBI:30616"/>
    </ligand>
</feature>
<feature type="binding site" evidence="1">
    <location>
        <position position="120"/>
    </location>
    <ligand>
        <name>ATP</name>
        <dbReference type="ChEBI" id="CHEBI:30616"/>
    </ligand>
</feature>
<feature type="binding site" evidence="1">
    <location>
        <position position="121"/>
    </location>
    <ligand>
        <name>ATP</name>
        <dbReference type="ChEBI" id="CHEBI:30616"/>
    </ligand>
</feature>
<feature type="binding site" evidence="1">
    <location>
        <position position="172"/>
    </location>
    <ligand>
        <name>ATP</name>
        <dbReference type="ChEBI" id="CHEBI:30616"/>
    </ligand>
</feature>
<feature type="binding site" evidence="1">
    <location>
        <position position="179"/>
    </location>
    <ligand>
        <name>ATP</name>
        <dbReference type="ChEBI" id="CHEBI:30616"/>
    </ligand>
</feature>
<feature type="binding site" evidence="1">
    <location>
        <position position="249"/>
    </location>
    <ligand>
        <name>Mg(2+)</name>
        <dbReference type="ChEBI" id="CHEBI:18420"/>
    </ligand>
</feature>
<feature type="binding site" evidence="1">
    <location>
        <position position="258"/>
    </location>
    <ligand>
        <name>ATP</name>
        <dbReference type="ChEBI" id="CHEBI:30616"/>
    </ligand>
</feature>
<feature type="binding site" evidence="1">
    <location>
        <position position="258"/>
    </location>
    <ligand>
        <name>Mg(2+)</name>
        <dbReference type="ChEBI" id="CHEBI:18420"/>
    </ligand>
</feature>
<organism>
    <name type="scientific">Cereibacter sphaeroides (strain ATCC 17025 / ATH 2.4.3)</name>
    <name type="common">Rhodobacter sphaeroides</name>
    <dbReference type="NCBI Taxonomy" id="349102"/>
    <lineage>
        <taxon>Bacteria</taxon>
        <taxon>Pseudomonadati</taxon>
        <taxon>Pseudomonadota</taxon>
        <taxon>Alphaproteobacteria</taxon>
        <taxon>Rhodobacterales</taxon>
        <taxon>Paracoccaceae</taxon>
        <taxon>Cereibacter</taxon>
    </lineage>
</organism>